<feature type="chain" id="PRO_0000390265" description="NADH-quinone oxidoreductase subunit K">
    <location>
        <begin position="1"/>
        <end position="95"/>
    </location>
</feature>
<feature type="transmembrane region" description="Helical" evidence="1">
    <location>
        <begin position="1"/>
        <end position="21"/>
    </location>
</feature>
<feature type="transmembrane region" description="Helical" evidence="1">
    <location>
        <begin position="25"/>
        <end position="45"/>
    </location>
</feature>
<feature type="transmembrane region" description="Helical" evidence="1">
    <location>
        <begin position="59"/>
        <end position="79"/>
    </location>
</feature>
<accession>Q72GD8</accession>
<keyword id="KW-0997">Cell inner membrane</keyword>
<keyword id="KW-1003">Cell membrane</keyword>
<keyword id="KW-0472">Membrane</keyword>
<keyword id="KW-0520">NAD</keyword>
<keyword id="KW-0874">Quinone</keyword>
<keyword id="KW-1278">Translocase</keyword>
<keyword id="KW-0812">Transmembrane</keyword>
<keyword id="KW-1133">Transmembrane helix</keyword>
<keyword id="KW-0813">Transport</keyword>
<evidence type="ECO:0000255" key="1">
    <source>
        <dbReference type="HAMAP-Rule" id="MF_01456"/>
    </source>
</evidence>
<protein>
    <recommendedName>
        <fullName evidence="1">NADH-quinone oxidoreductase subunit K</fullName>
        <ecNumber evidence="1">7.1.1.-</ecNumber>
    </recommendedName>
    <alternativeName>
        <fullName evidence="1">NADH dehydrogenase I subunit K</fullName>
    </alternativeName>
    <alternativeName>
        <fullName evidence="1">NDH-1 subunit K</fullName>
    </alternativeName>
</protein>
<comment type="function">
    <text evidence="1">NDH-1 shuttles electrons from NADH, via FMN and iron-sulfur (Fe-S) centers, to quinones in the respiratory chain. The immediate electron acceptor for the enzyme in this species is believed to be a menaquinone. Couples the redox reaction to proton translocation (for every two electrons transferred, four hydrogen ions are translocated across the cytoplasmic membrane), and thus conserves the redox energy in a proton gradient.</text>
</comment>
<comment type="catalytic activity">
    <reaction evidence="1">
        <text>a quinone + NADH + 5 H(+)(in) = a quinol + NAD(+) + 4 H(+)(out)</text>
        <dbReference type="Rhea" id="RHEA:57888"/>
        <dbReference type="ChEBI" id="CHEBI:15378"/>
        <dbReference type="ChEBI" id="CHEBI:24646"/>
        <dbReference type="ChEBI" id="CHEBI:57540"/>
        <dbReference type="ChEBI" id="CHEBI:57945"/>
        <dbReference type="ChEBI" id="CHEBI:132124"/>
    </reaction>
</comment>
<comment type="subunit">
    <text evidence="1">NDH-1 is composed of 15 different subunits. Subunits NuoA, H, J, K, L, M, N constitute the membrane sector of the complex.</text>
</comment>
<comment type="subcellular location">
    <subcellularLocation>
        <location evidence="1">Cell inner membrane</location>
        <topology evidence="1">Multi-pass membrane protein</topology>
    </subcellularLocation>
</comment>
<comment type="similarity">
    <text evidence="1">Belongs to the complex I subunit 4L family.</text>
</comment>
<dbReference type="EC" id="7.1.1.-" evidence="1"/>
<dbReference type="EMBL" id="AE017221">
    <property type="protein sequence ID" value="AAS82252.1"/>
    <property type="molecule type" value="Genomic_DNA"/>
</dbReference>
<dbReference type="RefSeq" id="WP_011174262.1">
    <property type="nucleotide sequence ID" value="NC_005835.1"/>
</dbReference>
<dbReference type="SMR" id="Q72GD8"/>
<dbReference type="KEGG" id="tth:TT_C1910"/>
<dbReference type="eggNOG" id="COG0713">
    <property type="taxonomic scope" value="Bacteria"/>
</dbReference>
<dbReference type="HOGENOM" id="CLU_144724_0_0_0"/>
<dbReference type="OrthoDB" id="9810120at2"/>
<dbReference type="Proteomes" id="UP000000592">
    <property type="component" value="Chromosome"/>
</dbReference>
<dbReference type="GO" id="GO:0030964">
    <property type="term" value="C:NADH dehydrogenase complex"/>
    <property type="evidence" value="ECO:0007669"/>
    <property type="project" value="TreeGrafter"/>
</dbReference>
<dbReference type="GO" id="GO:0005886">
    <property type="term" value="C:plasma membrane"/>
    <property type="evidence" value="ECO:0007669"/>
    <property type="project" value="UniProtKB-SubCell"/>
</dbReference>
<dbReference type="GO" id="GO:0050136">
    <property type="term" value="F:NADH:ubiquinone reductase (non-electrogenic) activity"/>
    <property type="evidence" value="ECO:0007669"/>
    <property type="project" value="UniProtKB-UniRule"/>
</dbReference>
<dbReference type="GO" id="GO:0048038">
    <property type="term" value="F:quinone binding"/>
    <property type="evidence" value="ECO:0007669"/>
    <property type="project" value="UniProtKB-KW"/>
</dbReference>
<dbReference type="GO" id="GO:0042773">
    <property type="term" value="P:ATP synthesis coupled electron transport"/>
    <property type="evidence" value="ECO:0007669"/>
    <property type="project" value="InterPro"/>
</dbReference>
<dbReference type="FunFam" id="1.10.287.3510:FF:000001">
    <property type="entry name" value="NADH-quinone oxidoreductase subunit K"/>
    <property type="match status" value="1"/>
</dbReference>
<dbReference type="Gene3D" id="1.10.287.3510">
    <property type="match status" value="1"/>
</dbReference>
<dbReference type="HAMAP" id="MF_01456">
    <property type="entry name" value="NDH1_NuoK"/>
    <property type="match status" value="1"/>
</dbReference>
<dbReference type="InterPro" id="IPR001133">
    <property type="entry name" value="NADH_UbQ_OxRdtase_chain4L/K"/>
</dbReference>
<dbReference type="InterPro" id="IPR039428">
    <property type="entry name" value="NUOK/Mnh_C1-like"/>
</dbReference>
<dbReference type="NCBIfam" id="NF004320">
    <property type="entry name" value="PRK05715.1-2"/>
    <property type="match status" value="1"/>
</dbReference>
<dbReference type="PANTHER" id="PTHR11434:SF21">
    <property type="entry name" value="NADH DEHYDROGENASE SUBUNIT 4L-RELATED"/>
    <property type="match status" value="1"/>
</dbReference>
<dbReference type="PANTHER" id="PTHR11434">
    <property type="entry name" value="NADH-UBIQUINONE OXIDOREDUCTASE SUBUNIT ND4L"/>
    <property type="match status" value="1"/>
</dbReference>
<dbReference type="Pfam" id="PF00420">
    <property type="entry name" value="Oxidored_q2"/>
    <property type="match status" value="1"/>
</dbReference>
<proteinExistence type="inferred from homology"/>
<organism>
    <name type="scientific">Thermus thermophilus (strain ATCC BAA-163 / DSM 7039 / HB27)</name>
    <dbReference type="NCBI Taxonomy" id="262724"/>
    <lineage>
        <taxon>Bacteria</taxon>
        <taxon>Thermotogati</taxon>
        <taxon>Deinococcota</taxon>
        <taxon>Deinococci</taxon>
        <taxon>Thermales</taxon>
        <taxon>Thermaceae</taxon>
        <taxon>Thermus</taxon>
    </lineage>
</organism>
<reference key="1">
    <citation type="journal article" date="2004" name="Nat. Biotechnol.">
        <title>The genome sequence of the extreme thermophile Thermus thermophilus.</title>
        <authorList>
            <person name="Henne A."/>
            <person name="Brueggemann H."/>
            <person name="Raasch C."/>
            <person name="Wiezer A."/>
            <person name="Hartsch T."/>
            <person name="Liesegang H."/>
            <person name="Johann A."/>
            <person name="Lienard T."/>
            <person name="Gohl O."/>
            <person name="Martinez-Arias R."/>
            <person name="Jacobi C."/>
            <person name="Starkuviene V."/>
            <person name="Schlenczeck S."/>
            <person name="Dencker S."/>
            <person name="Huber R."/>
            <person name="Klenk H.-P."/>
            <person name="Kramer W."/>
            <person name="Merkl R."/>
            <person name="Gottschalk G."/>
            <person name="Fritz H.-J."/>
        </authorList>
    </citation>
    <scope>NUCLEOTIDE SEQUENCE [LARGE SCALE GENOMIC DNA]</scope>
    <source>
        <strain>ATCC BAA-163 / DSM 7039 / HB27</strain>
    </source>
</reference>
<gene>
    <name evidence="1" type="primary">nuoK</name>
    <name type="ordered locus">TT_C1910</name>
</gene>
<name>NUOK_THET2</name>
<sequence>MSYLLASALLFALGVYGVLTRRTAILVFLSIELMLNAANLSLVGFARAYGLDGQVAALMVIAVAAAEVAVGLGLIVAIFRHRESTAVDDLSELRG</sequence>